<sequence>MADSEADKPLRKISAAFKKLAIIVNSPNPEVPVTQFSHACSLVSPLFGCLGIAFKFAEMDYVAKVDDLVRASSSISTLVVMMDKDIEADCVRKAGSHTRNLLRVKRGLDMVKVLFEQIIASEGDNSLKDPATKSYAQVFAPHHGWAIRKAVSLGMYALPTRAHLLNMLKEDEAAAKIHMQSYVNSSAPLITYLDNLFLSKQLGIDW</sequence>
<comment type="function">
    <text evidence="1 3 5 6 9">Exhibits selective intermembrane transfer of ceramide-1-phosphate (C1P) and phytoceramide-1-phosphate (PubMed:24412362, PubMed:28011644). Does not transport ceramide (Cer) or GalCer, suggesting a requirement for phosphate in the headgroup for functionality (PubMed:24412362). Transports in vitro sphingosine, but not glycosphingolipids (PubMed:11850411). Also has some in vitro activity with sphingomyelin, a lipid not detected in plant tissues (PubMed:18657186). The transport function may be not directly involved in regulating cell death. Rather, perturbations in the function of ACD11 or related components could be monitored by R-proteins, which then mediate defense and programmed cell death (PCD), as proposed in the guard hypothesis (Probable). C1P transfer is stimulated by phosphatidylserine in C1P source vesicles (PubMed:28011644). Regulates autophagy, inflammasome mediated IL1B and IL18 processing, and pyroptosis, but not apoptosis (PubMed:28011644).</text>
</comment>
<comment type="subunit">
    <text evidence="4">Interacts with BPA1, PRA1F2 and PRA1F3 (PubMed:18845362).</text>
</comment>
<comment type="interaction">
    <interactant intactId="EBI-2010923">
        <id>O64587</id>
    </interactant>
    <interactant intactId="EBI-2010933">
        <id>Q9LFD5</id>
        <label>BPA1</label>
    </interactant>
    <organismsDiffer>false</organismsDiffer>
    <experiments>4</experiments>
</comment>
<comment type="subcellular location">
    <subcellularLocation>
        <location evidence="4">Cytoplasm</location>
    </subcellularLocation>
</comment>
<comment type="disruption phenotype">
    <text evidence="1 2 5">Constitutive expression of defense-related genes that accompany the hypersensitive response normally triggered by avirulent pathogens. Induction of growth inhibition, premature leaf chlorosis and defense-related programmed cell death (PCD) at the early seedling stage, leading to a lethal phenotype before flowering (PubMed:11850411, PubMed:15923330). Large increase of cell death inducer phytoceramide (PubMed:24412362).</text>
</comment>
<comment type="miscellaneous">
    <text evidence="5">The clustered Lys-64/Arg-99/Arg-103 residues form a positively charged triad ideally arranged for binding phosphate, explaining the inability to bind sugar headgroups and transfer glycoproteins.</text>
</comment>
<comment type="similarity">
    <text evidence="8">Belongs to the GLTP family.</text>
</comment>
<gene>
    <name evidence="7" type="primary">ACD11</name>
    <name evidence="10" type="ordered locus">At2g34690</name>
    <name evidence="11" type="ORF">T29F13.10</name>
</gene>
<protein>
    <recommendedName>
        <fullName evidence="7">Accelerated cell death 11</fullName>
    </recommendedName>
    <alternativeName>
        <fullName evidence="8">Ceramide-1-phosphate transfer protein ACD11</fullName>
    </alternativeName>
    <alternativeName>
        <fullName evidence="8">Glycolipid transfer protein domain-containing protein ACD11</fullName>
    </alternativeName>
</protein>
<feature type="chain" id="PRO_0000432642" description="Accelerated cell death 11">
    <location>
        <begin position="1"/>
        <end position="206"/>
    </location>
</feature>
<feature type="binding site" evidence="5">
    <location>
        <position position="60"/>
    </location>
    <ligand>
        <name>an N-acylsphingoid base 1-phosphate</name>
        <dbReference type="ChEBI" id="CHEBI:84404"/>
    </ligand>
</feature>
<feature type="binding site" evidence="5">
    <location>
        <position position="64"/>
    </location>
    <ligand>
        <name>an N-acylsphingoid base 1-phosphate</name>
        <dbReference type="ChEBI" id="CHEBI:84404"/>
    </ligand>
</feature>
<feature type="binding site" evidence="5">
    <location>
        <position position="99"/>
    </location>
    <ligand>
        <name>an N-acylsphingoid base 1-phosphate</name>
        <dbReference type="ChEBI" id="CHEBI:84404"/>
    </ligand>
</feature>
<feature type="binding site" evidence="5">
    <location>
        <position position="103"/>
    </location>
    <ligand>
        <name>an N-acylsphingoid base 1-phosphate</name>
        <dbReference type="ChEBI" id="CHEBI:84404"/>
    </ligand>
</feature>
<feature type="binding site" evidence="5">
    <location>
        <position position="143"/>
    </location>
    <ligand>
        <name>an N-acylsphingoid base 1-phosphate</name>
        <dbReference type="ChEBI" id="CHEBI:84404"/>
    </ligand>
</feature>
<feature type="mutagenesis site" description="Decreased activity." evidence="5">
    <original>F</original>
    <variation>Q</variation>
    <location>
        <position position="47"/>
    </location>
</feature>
<feature type="mutagenesis site" description="Loss of 85% of activity." evidence="5">
    <original>D</original>
    <variation>A</variation>
    <location>
        <position position="60"/>
    </location>
</feature>
<feature type="mutagenesis site" description="Loss of 70% of activity." evidence="5">
    <original>D</original>
    <variation>N</variation>
    <location>
        <position position="60"/>
    </location>
</feature>
<feature type="mutagenesis site" description="Loss of lipid transfer, but no effect on PCD suppression." evidence="3">
    <original>D</original>
    <variation>V</variation>
    <location>
        <position position="60"/>
    </location>
</feature>
<feature type="mutagenesis site" description="Severe reduction in C1P transfer." evidence="5">
    <original>K</original>
    <variation>A</variation>
    <location>
        <position position="64"/>
    </location>
</feature>
<feature type="mutagenesis site" description="Severe reduction in C1P transfer." evidence="5">
    <original>R</original>
    <variation>A</variation>
    <variation>E</variation>
    <location>
        <position position="99"/>
    </location>
</feature>
<feature type="mutagenesis site" description="Severe reduction in C1P transfer." evidence="5">
    <original>R</original>
    <variation>A</variation>
    <location>
        <position position="103"/>
    </location>
</feature>
<feature type="mutagenesis site" description="No gain of galacosylceramide transfer and no effect on PCD suppression." evidence="3">
    <original>R</original>
    <variation>W</variation>
    <location>
        <position position="103"/>
    </location>
</feature>
<feature type="mutagenesis site" description="Loss of lipid transfer, but no effect on PCD suppression." evidence="3">
    <original>H</original>
    <variation>L</variation>
    <location>
        <position position="143"/>
    </location>
</feature>
<feature type="sequence conflict" description="In Ref. 4; AIU50562." evidence="8" ref="4">
    <location>
        <position position="30"/>
    </location>
</feature>
<feature type="sequence conflict" description="In Ref. 4; AIU50562." evidence="8" ref="4">
    <location>
        <position position="124"/>
    </location>
</feature>
<feature type="helix" evidence="13">
    <location>
        <begin position="9"/>
        <end position="24"/>
    </location>
</feature>
<feature type="strand" evidence="13">
    <location>
        <begin position="26"/>
        <end position="28"/>
    </location>
</feature>
<feature type="helix" evidence="13">
    <location>
        <begin position="33"/>
        <end position="50"/>
    </location>
</feature>
<feature type="helix" evidence="13">
    <location>
        <begin position="52"/>
        <end position="56"/>
    </location>
</feature>
<feature type="helix" evidence="13">
    <location>
        <begin position="57"/>
        <end position="60"/>
    </location>
</feature>
<feature type="helix" evidence="13">
    <location>
        <begin position="62"/>
        <end position="71"/>
    </location>
</feature>
<feature type="helix" evidence="13">
    <location>
        <begin position="72"/>
        <end position="74"/>
    </location>
</feature>
<feature type="helix" evidence="13">
    <location>
        <begin position="78"/>
        <end position="87"/>
    </location>
</feature>
<feature type="strand" evidence="14">
    <location>
        <begin position="91"/>
        <end position="93"/>
    </location>
</feature>
<feature type="helix" evidence="13">
    <location>
        <begin position="97"/>
        <end position="120"/>
    </location>
</feature>
<feature type="turn" evidence="13">
    <location>
        <begin position="121"/>
        <end position="123"/>
    </location>
</feature>
<feature type="helix" evidence="13">
    <location>
        <begin position="128"/>
        <end position="138"/>
    </location>
</feature>
<feature type="helix" evidence="13">
    <location>
        <begin position="140"/>
        <end position="142"/>
    </location>
</feature>
<feature type="helix" evidence="13">
    <location>
        <begin position="145"/>
        <end position="154"/>
    </location>
</feature>
<feature type="helix" evidence="13">
    <location>
        <begin position="155"/>
        <end position="157"/>
    </location>
</feature>
<feature type="helix" evidence="13">
    <location>
        <begin position="161"/>
        <end position="167"/>
    </location>
</feature>
<feature type="helix" evidence="13">
    <location>
        <begin position="172"/>
        <end position="198"/>
    </location>
</feature>
<feature type="turn" evidence="13">
    <location>
        <begin position="199"/>
        <end position="201"/>
    </location>
</feature>
<organism evidence="12">
    <name type="scientific">Arabidopsis thaliana</name>
    <name type="common">Mouse-ear cress</name>
    <dbReference type="NCBI Taxonomy" id="3702"/>
    <lineage>
        <taxon>Eukaryota</taxon>
        <taxon>Viridiplantae</taxon>
        <taxon>Streptophyta</taxon>
        <taxon>Embryophyta</taxon>
        <taxon>Tracheophyta</taxon>
        <taxon>Spermatophyta</taxon>
        <taxon>Magnoliopsida</taxon>
        <taxon>eudicotyledons</taxon>
        <taxon>Gunneridae</taxon>
        <taxon>Pentapetalae</taxon>
        <taxon>rosids</taxon>
        <taxon>malvids</taxon>
        <taxon>Brassicales</taxon>
        <taxon>Brassicaceae</taxon>
        <taxon>Camelineae</taxon>
        <taxon>Arabidopsis</taxon>
    </lineage>
</organism>
<dbReference type="EMBL" id="AC003096">
    <property type="protein sequence ID" value="AAC16265.1"/>
    <property type="molecule type" value="Genomic_DNA"/>
</dbReference>
<dbReference type="EMBL" id="CP002685">
    <property type="protein sequence ID" value="AEC09010.1"/>
    <property type="molecule type" value="Genomic_DNA"/>
</dbReference>
<dbReference type="EMBL" id="BT012177">
    <property type="protein sequence ID" value="AAS76271.1"/>
    <property type="molecule type" value="mRNA"/>
</dbReference>
<dbReference type="EMBL" id="KM399929">
    <property type="protein sequence ID" value="AIU50562.1"/>
    <property type="molecule type" value="mRNA"/>
</dbReference>
<dbReference type="PIR" id="T01366">
    <property type="entry name" value="T01366"/>
</dbReference>
<dbReference type="RefSeq" id="NP_181016.1">
    <property type="nucleotide sequence ID" value="NM_129023.5"/>
</dbReference>
<dbReference type="PDB" id="4NT1">
    <property type="method" value="X-ray"/>
    <property type="resolution" value="1.80 A"/>
    <property type="chains" value="A/B/C/D=1-206"/>
</dbReference>
<dbReference type="PDB" id="4NT2">
    <property type="method" value="X-ray"/>
    <property type="resolution" value="2.40 A"/>
    <property type="chains" value="A=1-206"/>
</dbReference>
<dbReference type="PDB" id="4NTG">
    <property type="method" value="X-ray"/>
    <property type="resolution" value="2.55 A"/>
    <property type="chains" value="A/B=1-206"/>
</dbReference>
<dbReference type="PDB" id="4NTI">
    <property type="method" value="X-ray"/>
    <property type="resolution" value="2.90 A"/>
    <property type="chains" value="A/B=1-206"/>
</dbReference>
<dbReference type="PDB" id="4NTO">
    <property type="method" value="X-ray"/>
    <property type="resolution" value="2.15 A"/>
    <property type="chains" value="A/B/C=1-206"/>
</dbReference>
<dbReference type="PDBsum" id="4NT1"/>
<dbReference type="PDBsum" id="4NT2"/>
<dbReference type="PDBsum" id="4NTG"/>
<dbReference type="PDBsum" id="4NTI"/>
<dbReference type="PDBsum" id="4NTO"/>
<dbReference type="SMR" id="O64587"/>
<dbReference type="FunCoup" id="O64587">
    <property type="interactions" value="1631"/>
</dbReference>
<dbReference type="IntAct" id="O64587">
    <property type="interactions" value="4"/>
</dbReference>
<dbReference type="STRING" id="3702.O64587"/>
<dbReference type="PaxDb" id="3702-AT2G34690.1"/>
<dbReference type="ProteomicsDB" id="244382"/>
<dbReference type="DNASU" id="818034"/>
<dbReference type="EnsemblPlants" id="AT2G34690.1">
    <property type="protein sequence ID" value="AT2G34690.1"/>
    <property type="gene ID" value="AT2G34690"/>
</dbReference>
<dbReference type="GeneID" id="818034"/>
<dbReference type="Gramene" id="AT2G34690.1">
    <property type="protein sequence ID" value="AT2G34690.1"/>
    <property type="gene ID" value="AT2G34690"/>
</dbReference>
<dbReference type="KEGG" id="ath:AT2G34690"/>
<dbReference type="Araport" id="AT2G34690"/>
<dbReference type="TAIR" id="AT2G34690">
    <property type="gene designation" value="ACD11"/>
</dbReference>
<dbReference type="eggNOG" id="KOG4189">
    <property type="taxonomic scope" value="Eukaryota"/>
</dbReference>
<dbReference type="HOGENOM" id="CLU_082630_0_0_1"/>
<dbReference type="InParanoid" id="O64587"/>
<dbReference type="OMA" id="FSHACTL"/>
<dbReference type="PhylomeDB" id="O64587"/>
<dbReference type="EvolutionaryTrace" id="O64587"/>
<dbReference type="PRO" id="PR:O64587"/>
<dbReference type="Proteomes" id="UP000006548">
    <property type="component" value="Chromosome 2"/>
</dbReference>
<dbReference type="ExpressionAtlas" id="O64587">
    <property type="expression patterns" value="baseline and differential"/>
</dbReference>
<dbReference type="GO" id="GO:0005737">
    <property type="term" value="C:cytoplasm"/>
    <property type="evidence" value="ECO:0007669"/>
    <property type="project" value="UniProtKB-SubCell"/>
</dbReference>
<dbReference type="GO" id="GO:0008289">
    <property type="term" value="F:lipid binding"/>
    <property type="evidence" value="ECO:0007669"/>
    <property type="project" value="UniProtKB-KW"/>
</dbReference>
<dbReference type="GO" id="GO:0140338">
    <property type="term" value="F:sphingomyelin transfer activity"/>
    <property type="evidence" value="ECO:0000314"/>
    <property type="project" value="TAIR"/>
</dbReference>
<dbReference type="GO" id="GO:0008219">
    <property type="term" value="P:cell death"/>
    <property type="evidence" value="ECO:0000315"/>
    <property type="project" value="TAIR"/>
</dbReference>
<dbReference type="GO" id="GO:0042742">
    <property type="term" value="P:defense response to bacterium"/>
    <property type="evidence" value="ECO:0000315"/>
    <property type="project" value="TAIR"/>
</dbReference>
<dbReference type="GO" id="GO:0009751">
    <property type="term" value="P:response to salicylic acid"/>
    <property type="evidence" value="ECO:0000315"/>
    <property type="project" value="TAIR"/>
</dbReference>
<dbReference type="FunFam" id="1.10.3520.10:FF:000005">
    <property type="entry name" value="Accelerated cell death 11"/>
    <property type="match status" value="1"/>
</dbReference>
<dbReference type="Gene3D" id="1.10.3520.10">
    <property type="entry name" value="Glycolipid transfer protein"/>
    <property type="match status" value="1"/>
</dbReference>
<dbReference type="InterPro" id="IPR036497">
    <property type="entry name" value="GLTP_sf"/>
</dbReference>
<dbReference type="InterPro" id="IPR014830">
    <property type="entry name" value="Glycolipid_transfer_prot_dom"/>
</dbReference>
<dbReference type="PANTHER" id="PTHR10219:SF43">
    <property type="entry name" value="GLYCOLIPID TRANSFER PROTEIN DOMAIN-CONTAINING PROTEIN"/>
    <property type="match status" value="1"/>
</dbReference>
<dbReference type="PANTHER" id="PTHR10219">
    <property type="entry name" value="GLYCOLIPID TRANSFER PROTEIN-RELATED"/>
    <property type="match status" value="1"/>
</dbReference>
<dbReference type="Pfam" id="PF08718">
    <property type="entry name" value="GLTP"/>
    <property type="match status" value="1"/>
</dbReference>
<dbReference type="SUPFAM" id="SSF110004">
    <property type="entry name" value="Glycolipid transfer protein, GLTP"/>
    <property type="match status" value="1"/>
</dbReference>
<proteinExistence type="evidence at protein level"/>
<name>ACD11_ARATH</name>
<reference key="1">
    <citation type="journal article" date="1999" name="Nature">
        <title>Sequence and analysis of chromosome 2 of the plant Arabidopsis thaliana.</title>
        <authorList>
            <person name="Lin X."/>
            <person name="Kaul S."/>
            <person name="Rounsley S.D."/>
            <person name="Shea T.P."/>
            <person name="Benito M.-I."/>
            <person name="Town C.D."/>
            <person name="Fujii C.Y."/>
            <person name="Mason T.M."/>
            <person name="Bowman C.L."/>
            <person name="Barnstead M.E."/>
            <person name="Feldblyum T.V."/>
            <person name="Buell C.R."/>
            <person name="Ketchum K.A."/>
            <person name="Lee J.J."/>
            <person name="Ronning C.M."/>
            <person name="Koo H.L."/>
            <person name="Moffat K.S."/>
            <person name="Cronin L.A."/>
            <person name="Shen M."/>
            <person name="Pai G."/>
            <person name="Van Aken S."/>
            <person name="Umayam L."/>
            <person name="Tallon L.J."/>
            <person name="Gill J.E."/>
            <person name="Adams M.D."/>
            <person name="Carrera A.J."/>
            <person name="Creasy T.H."/>
            <person name="Goodman H.M."/>
            <person name="Somerville C.R."/>
            <person name="Copenhaver G.P."/>
            <person name="Preuss D."/>
            <person name="Nierman W.C."/>
            <person name="White O."/>
            <person name="Eisen J.A."/>
            <person name="Salzberg S.L."/>
            <person name="Fraser C.M."/>
            <person name="Venter J.C."/>
        </authorList>
    </citation>
    <scope>NUCLEOTIDE SEQUENCE [LARGE SCALE GENOMIC DNA]</scope>
    <source>
        <strain>cv. Columbia</strain>
    </source>
</reference>
<reference key="2">
    <citation type="journal article" date="2017" name="Plant J.">
        <title>Araport11: a complete reannotation of the Arabidopsis thaliana reference genome.</title>
        <authorList>
            <person name="Cheng C.Y."/>
            <person name="Krishnakumar V."/>
            <person name="Chan A.P."/>
            <person name="Thibaud-Nissen F."/>
            <person name="Schobel S."/>
            <person name="Town C.D."/>
        </authorList>
    </citation>
    <scope>GENOME REANNOTATION</scope>
    <source>
        <strain>cv. Columbia</strain>
    </source>
</reference>
<reference key="3">
    <citation type="submission" date="2004-03" db="EMBL/GenBank/DDBJ databases">
        <title>Arabidopsis ORF clones.</title>
        <authorList>
            <person name="Kim C.J."/>
            <person name="Chen H."/>
            <person name="Cheuk R."/>
            <person name="Shinn P."/>
            <person name="Carninci P."/>
            <person name="Hayashizaki Y."/>
            <person name="Ishida J."/>
            <person name="Kamiya A."/>
            <person name="Kawai J."/>
            <person name="Narusaka M."/>
            <person name="Sakurai T."/>
            <person name="Satou M."/>
            <person name="Seki M."/>
            <person name="Shinozaki K."/>
            <person name="Ecker J.R."/>
        </authorList>
    </citation>
    <scope>NUCLEOTIDE SEQUENCE [LARGE SCALE MRNA]</scope>
    <source>
        <strain>cv. Columbia</strain>
    </source>
</reference>
<reference key="4">
    <citation type="journal article" date="2014" name="Nat. Commun.">
        <title>Resolution of deep angiosperm phylogeny using conserved nuclear genes and estimates of early divergence times.</title>
        <authorList>
            <person name="Zeng L."/>
            <person name="Zhang Q."/>
            <person name="Sun R."/>
            <person name="Kong H."/>
            <person name="Zhang N."/>
            <person name="Ma H."/>
        </authorList>
    </citation>
    <scope>NUCLEOTIDE SEQUENCE [MRNA] OF 8-204</scope>
</reference>
<reference key="5">
    <citation type="journal article" date="2002" name="Genes Dev.">
        <title>Knockout of Arabidopsis accelerated-cell-death11 encoding a sphingosine transfer protein causes activation of programmed cell death and defense.</title>
        <authorList>
            <person name="Brodersen P."/>
            <person name="Petersen M."/>
            <person name="Pike H.M."/>
            <person name="Olszak B."/>
            <person name="Skov S."/>
            <person name="Odum N."/>
            <person name="Jorgensen L.B."/>
            <person name="Brown R.E."/>
            <person name="Mundy J."/>
        </authorList>
    </citation>
    <scope>FUNCTION</scope>
    <scope>DISRUPTION PHENOTYPE</scope>
    <source>
        <strain>cv. Landsberg erecta</strain>
    </source>
</reference>
<reference key="6">
    <citation type="journal article" date="2005" name="Plant Physiol.">
        <title>The role of salicylic acid in the induction of cell death in Arabidopsis acd11.</title>
        <authorList>
            <person name="Brodersen P."/>
            <person name="Malinovsky F.G."/>
            <person name="Hematy K."/>
            <person name="Newman M.A."/>
            <person name="Mundy J."/>
        </authorList>
    </citation>
    <scope>FUNCTION</scope>
    <scope>DISRUPTION PHENOTYPE</scope>
    <source>
        <strain>cv. Columbia</strain>
    </source>
</reference>
<reference key="7">
    <citation type="journal article" date="2006" name="J. Mol. Biol.">
        <title>Structural evidence for adaptive ligand binding of glycolipid transfer protein.</title>
        <authorList>
            <person name="Airenne T.T."/>
            <person name="Kidron H."/>
            <person name="Nymalm Y."/>
            <person name="Nylund M."/>
            <person name="West G."/>
            <person name="Mattjus P."/>
            <person name="Salminen T.A."/>
        </authorList>
    </citation>
    <scope>3D-STRUCTURE MODELING</scope>
</reference>
<reference key="8">
    <citation type="journal article" date="2008" name="FEBS J.">
        <title>Human GLTP and mutant forms of ACD11 suppress cell death in the Arabidopsis acd11 mutant.</title>
        <authorList>
            <person name="Petersen N.H."/>
            <person name="McKinney L.V."/>
            <person name="Pike H."/>
            <person name="Hofius D."/>
            <person name="Zakaria A."/>
            <person name="Brodersen P."/>
            <person name="Petersen M."/>
            <person name="Brown R.E."/>
            <person name="Mundy J."/>
        </authorList>
    </citation>
    <scope>FUNCTION</scope>
    <scope>3D-STRUCTURE MODELING</scope>
    <scope>MUTAGENESIS OF ASP-60; ARG-103 AND HIS-143</scope>
</reference>
<reference key="9">
    <citation type="journal article" date="2009" name="J. Plant Physiol.">
        <title>Identification of proteins interacting with Arabidopsis ACD11.</title>
        <authorList>
            <person name="Petersen N.H."/>
            <person name="Joensen J."/>
            <person name="McKinney L.V."/>
            <person name="Brodersen P."/>
            <person name="Petersen M."/>
            <person name="Hofius D."/>
            <person name="Mundy J."/>
        </authorList>
    </citation>
    <scope>INTERACTION WITH BPA1; PRA1F2 AND PRA1F3</scope>
    <scope>SUBCELLULAR LOCATION</scope>
</reference>
<reference key="10">
    <citation type="journal article" date="2017" name="J. Biol. Chem.">
        <title>Phosphatidylserine Stimulates Ceramide 1-Phosphate (C1P) Intermembrane Transfer by C1P Transfer Proteins.</title>
        <authorList>
            <person name="Zhai X."/>
            <person name="Gao Y.G."/>
            <person name="Mishra S.K."/>
            <person name="Simanshu D.K."/>
            <person name="Boldyrev I.A."/>
            <person name="Benson L.M."/>
            <person name="Bergen H.R. III"/>
            <person name="Malinina L."/>
            <person name="Mundy J."/>
            <person name="Molotkovsky J.G."/>
            <person name="Patel D.J."/>
            <person name="Brown R.E."/>
        </authorList>
    </citation>
    <scope>FUNCTION</scope>
    <scope>LIPID-BINDING</scope>
</reference>
<reference key="11">
    <citation type="journal article" date="2014" name="Cell Rep.">
        <title>Arabidopsis accelerated cell death 11, ACD11, is a ceramide-1-phosphate transfer protein and intermediary regulator of phytoceramide levels.</title>
        <authorList>
            <person name="Simanshu D.K."/>
            <person name="Zhai X."/>
            <person name="Munch D."/>
            <person name="Hofius D."/>
            <person name="Markham J.E."/>
            <person name="Bielawski J."/>
            <person name="Bielawska A."/>
            <person name="Malinina L."/>
            <person name="Molotkovsky J.G."/>
            <person name="Mundy J.W."/>
            <person name="Patel D.J."/>
            <person name="Brown R.E."/>
        </authorList>
    </citation>
    <scope>X-RAY CRYSTALLOGRAPHY (1.80 ANGSTROMS) IN COMPLEX WITH SUBSTRATES</scope>
    <scope>FUNCTION</scope>
    <scope>MUTAGENESIS OF PHE-47; ASP-60; LYS-64; ARG-99 AND ARG-103</scope>
    <scope>DISRUPTION PHENOTYPE</scope>
</reference>
<evidence type="ECO:0000269" key="1">
    <source>
    </source>
</evidence>
<evidence type="ECO:0000269" key="2">
    <source>
    </source>
</evidence>
<evidence type="ECO:0000269" key="3">
    <source>
    </source>
</evidence>
<evidence type="ECO:0000269" key="4">
    <source>
    </source>
</evidence>
<evidence type="ECO:0000269" key="5">
    <source>
    </source>
</evidence>
<evidence type="ECO:0000269" key="6">
    <source>
    </source>
</evidence>
<evidence type="ECO:0000303" key="7">
    <source>
    </source>
</evidence>
<evidence type="ECO:0000305" key="8"/>
<evidence type="ECO:0000305" key="9">
    <source>
    </source>
</evidence>
<evidence type="ECO:0000312" key="10">
    <source>
        <dbReference type="Araport" id="AT2G34690"/>
    </source>
</evidence>
<evidence type="ECO:0000312" key="11">
    <source>
        <dbReference type="EMBL" id="AAC16265.1"/>
    </source>
</evidence>
<evidence type="ECO:0000312" key="12">
    <source>
        <dbReference type="Proteomes" id="UP000006548"/>
    </source>
</evidence>
<evidence type="ECO:0007829" key="13">
    <source>
        <dbReference type="PDB" id="4NT1"/>
    </source>
</evidence>
<evidence type="ECO:0007829" key="14">
    <source>
        <dbReference type="PDB" id="4NTO"/>
    </source>
</evidence>
<accession>O64587</accession>
<accession>A0A097PRA1</accession>
<keyword id="KW-0002">3D-structure</keyword>
<keyword id="KW-0963">Cytoplasm</keyword>
<keyword id="KW-0445">Lipid transport</keyword>
<keyword id="KW-0446">Lipid-binding</keyword>
<keyword id="KW-1185">Reference proteome</keyword>
<keyword id="KW-0813">Transport</keyword>